<gene>
    <name evidence="7" type="primary">RHPN1</name>
    <name type="synonym">KIAA1929</name>
</gene>
<organism>
    <name type="scientific">Homo sapiens</name>
    <name type="common">Human</name>
    <dbReference type="NCBI Taxonomy" id="9606"/>
    <lineage>
        <taxon>Eukaryota</taxon>
        <taxon>Metazoa</taxon>
        <taxon>Chordata</taxon>
        <taxon>Craniata</taxon>
        <taxon>Vertebrata</taxon>
        <taxon>Euteleostomi</taxon>
        <taxon>Mammalia</taxon>
        <taxon>Eutheria</taxon>
        <taxon>Euarchontoglires</taxon>
        <taxon>Primates</taxon>
        <taxon>Haplorrhini</taxon>
        <taxon>Catarrhini</taxon>
        <taxon>Hominidae</taxon>
        <taxon>Homo</taxon>
    </lineage>
</organism>
<name>RHPN1_HUMAN</name>
<protein>
    <recommendedName>
        <fullName evidence="6">Rhophilin-1</fullName>
    </recommendedName>
    <alternativeName>
        <fullName>GTP-Rho-binding protein 1</fullName>
    </alternativeName>
</protein>
<sequence length="670" mass="73590">MILEERPDGAGAGEESPRLQGCDSLTQIQCGQLQSRRAQIHQQIDKELQMRTGAENLYRATSNNRVRETVALELSYVNSNLQLLKEELEELSGGVDPGRHGSEAVTVPMIPLGLKETKELDWSTPLKELISVHFGEDGASYEAEIRELEALRQAMRTPSRNESGLELLTAYYNQLCFLDARFLTPARSLGLFFHWYDSLTGVPAQQRALAFEKGSVLFNIGALHTQIGARQDRSCTEGARRAMEAFQRAAGAFSLLRENFSHAPSPDMSAASLCALEQLMMAQAQECVFEGLSPPASMAPQDCLAQLRLAQEAAQVAAEYRLVHRTMAQPPVHDYVPVSWTALVHVKAEYFRSLAHYHVAMALCDGSPATEGELPTHEQVFLQPPTSSKPRGPVLPQELEERRQLGKAHLKRAILGQEEALRLHALCRVLREVDLLRAVISQTLQRSLAKYAELDREDDFCEAAEAPDIQPKTHQKPEARMPRLSQGKGPDIFHRLGPLSVFSAKNRWRLVGPVHLTRGEGGFGLTLRGDSPVLIAAVIPGSQAAAAGLKEGDYIVSVNGQPCRWWRHAEVVTELKAAGEAGASLQVVSLLPSSRLPSLGDRRPVLLGPRGLLRSQREHGCKTPASTWASPRPLLNWSRKAQQGKTGGCPQPCAPVKPAPPSSLKHPGWP</sequence>
<evidence type="ECO:0000250" key="1">
    <source>
        <dbReference type="UniProtKB" id="Q61085"/>
    </source>
</evidence>
<evidence type="ECO:0000255" key="2">
    <source>
        <dbReference type="PROSITE-ProRule" id="PRU00143"/>
    </source>
</evidence>
<evidence type="ECO:0000255" key="3">
    <source>
        <dbReference type="PROSITE-ProRule" id="PRU00526"/>
    </source>
</evidence>
<evidence type="ECO:0000255" key="4">
    <source>
        <dbReference type="PROSITE-ProRule" id="PRU01207"/>
    </source>
</evidence>
<evidence type="ECO:0000256" key="5">
    <source>
        <dbReference type="SAM" id="MobiDB-lite"/>
    </source>
</evidence>
<evidence type="ECO:0000305" key="6"/>
<evidence type="ECO:0000312" key="7">
    <source>
        <dbReference type="HGNC" id="HGNC:19973"/>
    </source>
</evidence>
<dbReference type="EMBL" id="AY082588">
    <property type="protein sequence ID" value="AAL89809.1"/>
    <property type="status" value="ALT_SEQ"/>
    <property type="molecule type" value="mRNA"/>
</dbReference>
<dbReference type="EMBL" id="BC025767">
    <property type="protein sequence ID" value="AAH25767.1"/>
    <property type="molecule type" value="mRNA"/>
</dbReference>
<dbReference type="EMBL" id="AB067516">
    <property type="protein sequence ID" value="BAB67822.1"/>
    <property type="status" value="ALT_SEQ"/>
    <property type="molecule type" value="mRNA"/>
</dbReference>
<dbReference type="CCDS" id="CCDS47927.1"/>
<dbReference type="RefSeq" id="NP_443156.2">
    <property type="nucleotide sequence ID" value="NM_052924.3"/>
</dbReference>
<dbReference type="SMR" id="Q8TCX5"/>
<dbReference type="BioGRID" id="125372">
    <property type="interactions" value="54"/>
</dbReference>
<dbReference type="FunCoup" id="Q8TCX5">
    <property type="interactions" value="679"/>
</dbReference>
<dbReference type="IntAct" id="Q8TCX5">
    <property type="interactions" value="55"/>
</dbReference>
<dbReference type="MINT" id="Q8TCX5"/>
<dbReference type="STRING" id="9606.ENSP00000289013"/>
<dbReference type="iPTMnet" id="Q8TCX5"/>
<dbReference type="PhosphoSitePlus" id="Q8TCX5"/>
<dbReference type="BioMuta" id="RHPN1"/>
<dbReference type="DMDM" id="30173334"/>
<dbReference type="jPOST" id="Q8TCX5"/>
<dbReference type="MassIVE" id="Q8TCX5"/>
<dbReference type="PaxDb" id="9606-ENSP00000289013"/>
<dbReference type="PeptideAtlas" id="Q8TCX5"/>
<dbReference type="Pumba" id="Q8TCX5"/>
<dbReference type="Antibodypedia" id="7394">
    <property type="antibodies" value="169 antibodies from 25 providers"/>
</dbReference>
<dbReference type="DNASU" id="114822"/>
<dbReference type="Ensembl" id="ENST00000289013.11">
    <property type="protein sequence ID" value="ENSP00000289013.6"/>
    <property type="gene ID" value="ENSG00000158106.15"/>
</dbReference>
<dbReference type="GeneID" id="114822"/>
<dbReference type="KEGG" id="hsa:114822"/>
<dbReference type="MANE-Select" id="ENST00000289013.11">
    <property type="protein sequence ID" value="ENSP00000289013.6"/>
    <property type="RefSeq nucleotide sequence ID" value="NM_052924.3"/>
    <property type="RefSeq protein sequence ID" value="NP_443156.2"/>
</dbReference>
<dbReference type="UCSC" id="uc003yyb.4">
    <property type="organism name" value="human"/>
</dbReference>
<dbReference type="AGR" id="HGNC:19973"/>
<dbReference type="CTD" id="114822"/>
<dbReference type="DisGeNET" id="114822"/>
<dbReference type="GeneCards" id="RHPN1"/>
<dbReference type="HGNC" id="HGNC:19973">
    <property type="gene designation" value="RHPN1"/>
</dbReference>
<dbReference type="HPA" id="ENSG00000158106">
    <property type="expression patterns" value="Tissue enhanced (pituitary gland, thyroid gland)"/>
</dbReference>
<dbReference type="MIM" id="601031">
    <property type="type" value="gene"/>
</dbReference>
<dbReference type="neXtProt" id="NX_Q8TCX5"/>
<dbReference type="OpenTargets" id="ENSG00000158106"/>
<dbReference type="PharmGKB" id="PA134987144"/>
<dbReference type="VEuPathDB" id="HostDB:ENSG00000158106"/>
<dbReference type="eggNOG" id="KOG2220">
    <property type="taxonomic scope" value="Eukaryota"/>
</dbReference>
<dbReference type="GeneTree" id="ENSGT00940000153837"/>
<dbReference type="HOGENOM" id="CLU_006514_3_0_1"/>
<dbReference type="InParanoid" id="Q8TCX5"/>
<dbReference type="OMA" id="PPVHDYM"/>
<dbReference type="OrthoDB" id="64867at2759"/>
<dbReference type="PAN-GO" id="Q8TCX5">
    <property type="GO annotations" value="1 GO annotation based on evolutionary models"/>
</dbReference>
<dbReference type="PhylomeDB" id="Q8TCX5"/>
<dbReference type="TreeFam" id="TF323502"/>
<dbReference type="PathwayCommons" id="Q8TCX5"/>
<dbReference type="Reactome" id="R-HSA-5666185">
    <property type="pathway name" value="RHO GTPases Activate Rhotekin and Rhophilins"/>
</dbReference>
<dbReference type="Reactome" id="R-HSA-8980692">
    <property type="pathway name" value="RHOA GTPase cycle"/>
</dbReference>
<dbReference type="SignaLink" id="Q8TCX5"/>
<dbReference type="BioGRID-ORCS" id="114822">
    <property type="hits" value="74 hits in 1148 CRISPR screens"/>
</dbReference>
<dbReference type="GeneWiki" id="RHPN1"/>
<dbReference type="GenomeRNAi" id="114822"/>
<dbReference type="Pharos" id="Q8TCX5">
    <property type="development level" value="Tbio"/>
</dbReference>
<dbReference type="PRO" id="PR:Q8TCX5"/>
<dbReference type="Proteomes" id="UP000005640">
    <property type="component" value="Chromosome 8"/>
</dbReference>
<dbReference type="RNAct" id="Q8TCX5">
    <property type="molecule type" value="protein"/>
</dbReference>
<dbReference type="Bgee" id="ENSG00000158106">
    <property type="expression patterns" value="Expressed in right lobe of thyroid gland and 149 other cell types or tissues"/>
</dbReference>
<dbReference type="GO" id="GO:0005829">
    <property type="term" value="C:cytosol"/>
    <property type="evidence" value="ECO:0000304"/>
    <property type="project" value="Reactome"/>
</dbReference>
<dbReference type="GO" id="GO:0051497">
    <property type="term" value="P:negative regulation of stress fiber assembly"/>
    <property type="evidence" value="ECO:0000318"/>
    <property type="project" value="GO_Central"/>
</dbReference>
<dbReference type="GO" id="GO:0007165">
    <property type="term" value="P:signal transduction"/>
    <property type="evidence" value="ECO:0007669"/>
    <property type="project" value="InterPro"/>
</dbReference>
<dbReference type="CDD" id="cd09248">
    <property type="entry name" value="BRO1_Rhophilin_1"/>
    <property type="match status" value="1"/>
</dbReference>
<dbReference type="CDD" id="cd06712">
    <property type="entry name" value="PDZ_rhophilin-like"/>
    <property type="match status" value="1"/>
</dbReference>
<dbReference type="FunFam" id="1.10.287.160:FF:000007">
    <property type="entry name" value="Rhophilin-2"/>
    <property type="match status" value="1"/>
</dbReference>
<dbReference type="FunFam" id="1.25.40.280:FF:000003">
    <property type="entry name" value="RHPN1 isoform 1"/>
    <property type="match status" value="1"/>
</dbReference>
<dbReference type="FunFam" id="2.30.42.10:FF:000160">
    <property type="entry name" value="RHPN1 isoform 1"/>
    <property type="match status" value="1"/>
</dbReference>
<dbReference type="Gene3D" id="2.30.42.10">
    <property type="match status" value="1"/>
</dbReference>
<dbReference type="Gene3D" id="1.25.40.280">
    <property type="entry name" value="alix/aip1 like domains"/>
    <property type="match status" value="1"/>
</dbReference>
<dbReference type="Gene3D" id="1.10.287.160">
    <property type="entry name" value="HR1 repeat"/>
    <property type="match status" value="1"/>
</dbReference>
<dbReference type="InterPro" id="IPR004328">
    <property type="entry name" value="BRO1_dom"/>
</dbReference>
<dbReference type="InterPro" id="IPR038499">
    <property type="entry name" value="BRO1_sf"/>
</dbReference>
<dbReference type="InterPro" id="IPR011072">
    <property type="entry name" value="HR1_rho-bd"/>
</dbReference>
<dbReference type="InterPro" id="IPR036274">
    <property type="entry name" value="HR1_rpt_sf"/>
</dbReference>
<dbReference type="InterPro" id="IPR001478">
    <property type="entry name" value="PDZ"/>
</dbReference>
<dbReference type="InterPro" id="IPR036034">
    <property type="entry name" value="PDZ_sf"/>
</dbReference>
<dbReference type="InterPro" id="IPR042715">
    <property type="entry name" value="Rhophilin-1_BRO1"/>
</dbReference>
<dbReference type="InterPro" id="IPR047138">
    <property type="entry name" value="RHPN1_2"/>
</dbReference>
<dbReference type="PANTHER" id="PTHR23031">
    <property type="entry name" value="RHOPHILIN"/>
    <property type="match status" value="1"/>
</dbReference>
<dbReference type="PANTHER" id="PTHR23031:SF6">
    <property type="entry name" value="RHOPHILIN-1"/>
    <property type="match status" value="1"/>
</dbReference>
<dbReference type="Pfam" id="PF03097">
    <property type="entry name" value="BRO1"/>
    <property type="match status" value="1"/>
</dbReference>
<dbReference type="Pfam" id="PF02185">
    <property type="entry name" value="HR1"/>
    <property type="match status" value="1"/>
</dbReference>
<dbReference type="Pfam" id="PF00595">
    <property type="entry name" value="PDZ"/>
    <property type="match status" value="1"/>
</dbReference>
<dbReference type="SMART" id="SM01041">
    <property type="entry name" value="BRO1"/>
    <property type="match status" value="1"/>
</dbReference>
<dbReference type="SMART" id="SM00742">
    <property type="entry name" value="Hr1"/>
    <property type="match status" value="1"/>
</dbReference>
<dbReference type="SMART" id="SM00228">
    <property type="entry name" value="PDZ"/>
    <property type="match status" value="1"/>
</dbReference>
<dbReference type="SUPFAM" id="SSF46585">
    <property type="entry name" value="HR1 repeat"/>
    <property type="match status" value="1"/>
</dbReference>
<dbReference type="SUPFAM" id="SSF50156">
    <property type="entry name" value="PDZ domain-like"/>
    <property type="match status" value="1"/>
</dbReference>
<dbReference type="PROSITE" id="PS51180">
    <property type="entry name" value="BRO1"/>
    <property type="match status" value="1"/>
</dbReference>
<dbReference type="PROSITE" id="PS50106">
    <property type="entry name" value="PDZ"/>
    <property type="match status" value="1"/>
</dbReference>
<dbReference type="PROSITE" id="PS51860">
    <property type="entry name" value="REM_1"/>
    <property type="match status" value="1"/>
</dbReference>
<accession>Q8TCX5</accession>
<accession>Q8TAV1</accession>
<accession>Q96PV9</accession>
<comment type="function">
    <text evidence="1">Has no enzymatic activity. May serve as a target for Rho, and interact with some cytoskeletal component upon Rho binding or relay a Rho signal to other molecules.</text>
</comment>
<comment type="subunit">
    <text evidence="1">Binds specifically to GTP-Rho. Interacts with ROPN1.</text>
</comment>
<comment type="interaction">
    <interactant intactId="EBI-746325">
        <id>Q8TCX5</id>
    </interactant>
    <interactant intactId="EBI-739624">
        <id>Q8NHQ1</id>
        <label>CEP70</label>
    </interactant>
    <organismsDiffer>false</organismsDiffer>
    <experiments>3</experiments>
</comment>
<comment type="interaction">
    <interactant intactId="EBI-746325">
        <id>Q8TCX5</id>
    </interactant>
    <interactant intactId="EBI-744302">
        <id>P14136</id>
        <label>GFAP</label>
    </interactant>
    <organismsDiffer>false</organismsDiffer>
    <experiments>3</experiments>
</comment>
<comment type="interaction">
    <interactant intactId="EBI-746325">
        <id>Q8TCX5</id>
    </interactant>
    <interactant intactId="EBI-618309">
        <id>Q08379</id>
        <label>GOLGA2</label>
    </interactant>
    <organismsDiffer>false</organismsDiffer>
    <experiments>5</experiments>
</comment>
<comment type="interaction">
    <interactant intactId="EBI-746325">
        <id>Q8TCX5</id>
    </interactant>
    <interactant intactId="EBI-473189">
        <id>Q96D09</id>
        <label>GPRASP2</label>
    </interactant>
    <organismsDiffer>false</organismsDiffer>
    <experiments>3</experiments>
</comment>
<comment type="interaction">
    <interactant intactId="EBI-746325">
        <id>Q8TCX5</id>
    </interactant>
    <interactant intactId="EBI-747754">
        <id>P28799</id>
        <label>GRN</label>
    </interactant>
    <organismsDiffer>false</organismsDiffer>
    <experiments>3</experiments>
</comment>
<comment type="interaction">
    <interactant intactId="EBI-746325">
        <id>Q8TCX5</id>
    </interactant>
    <interactant intactId="EBI-712814">
        <id>P54257</id>
        <label>HAP1</label>
    </interactant>
    <organismsDiffer>false</organismsDiffer>
    <experiments>3</experiments>
</comment>
<comment type="interaction">
    <interactant intactId="EBI-746325">
        <id>Q8TCX5</id>
    </interactant>
    <interactant intactId="EBI-948001">
        <id>Q15323</id>
        <label>KRT31</label>
    </interactant>
    <organismsDiffer>false</organismsDiffer>
    <experiments>3</experiments>
</comment>
<comment type="interaction">
    <interactant intactId="EBI-746325">
        <id>Q8TCX5</id>
    </interactant>
    <interactant intactId="EBI-351935">
        <id>P02545</id>
        <label>LMNA</label>
    </interactant>
    <organismsDiffer>false</organismsDiffer>
    <experiments>3</experiments>
</comment>
<comment type="interaction">
    <interactant intactId="EBI-746325">
        <id>Q8TCX5</id>
    </interactant>
    <interactant intactId="EBI-1216080">
        <id>Q9Y250</id>
        <label>LZTS1</label>
    </interactant>
    <organismsDiffer>false</organismsDiffer>
    <experiments>3</experiments>
</comment>
<comment type="interaction">
    <interactant intactId="EBI-746325">
        <id>Q8TCX5</id>
    </interactant>
    <interactant intactId="EBI-742948">
        <id>Q5JR59</id>
        <label>MTUS2</label>
    </interactant>
    <organismsDiffer>false</organismsDiffer>
    <experiments>4</experiments>
</comment>
<comment type="interaction">
    <interactant intactId="EBI-746325">
        <id>Q8TCX5</id>
    </interactant>
    <interactant intactId="EBI-475646">
        <id>P07196</id>
        <label>NEFL</label>
    </interactant>
    <organismsDiffer>false</organismsDiffer>
    <experiments>3</experiments>
</comment>
<comment type="interaction">
    <interactant intactId="EBI-746325">
        <id>Q8TCX5</id>
    </interactant>
    <interactant intactId="EBI-988601">
        <id>O43933</id>
        <label>PEX1</label>
    </interactant>
    <organismsDiffer>false</organismsDiffer>
    <experiments>3</experiments>
</comment>
<comment type="interaction">
    <interactant intactId="EBI-746325">
        <id>Q8TCX5</id>
    </interactant>
    <interactant intactId="EBI-5235340">
        <id>Q7Z699</id>
        <label>SPRED1</label>
    </interactant>
    <organismsDiffer>false</organismsDiffer>
    <experiments>3</experiments>
</comment>
<comment type="interaction">
    <interactant intactId="EBI-746325">
        <id>Q8TCX5</id>
    </interactant>
    <interactant intactId="EBI-719493">
        <id>P14373</id>
        <label>TRIM27</label>
    </interactant>
    <organismsDiffer>false</organismsDiffer>
    <experiments>3</experiments>
</comment>
<comment type="interaction">
    <interactant intactId="EBI-746325">
        <id>Q8TCX5</id>
    </interactant>
    <interactant intactId="EBI-720609">
        <id>O76024</id>
        <label>WFS1</label>
    </interactant>
    <organismsDiffer>false</organismsDiffer>
    <experiments>3</experiments>
</comment>
<comment type="domain">
    <text evidence="1">The PDZ domain mediates interaction with ROPN1.</text>
</comment>
<comment type="similarity">
    <text evidence="6">Belongs to the RHPN family.</text>
</comment>
<comment type="sequence caution" evidence="6">
    <conflict type="miscellaneous discrepancy">
        <sequence resource="EMBL-CDS" id="AAL89809"/>
    </conflict>
    <text>Intron retention.</text>
</comment>
<comment type="sequence caution" evidence="6">
    <conflict type="frameshift">
        <sequence resource="EMBL-CDS" id="BAB67822"/>
    </conflict>
</comment>
<comment type="sequence caution" evidence="6">
    <conflict type="miscellaneous discrepancy">
        <sequence resource="EMBL-CDS" id="BAB67822"/>
    </conflict>
    <text>Intron retention.</text>
</comment>
<feature type="chain" id="PRO_0000218895" description="Rhophilin-1">
    <location>
        <begin position="1"/>
        <end position="670"/>
    </location>
</feature>
<feature type="domain" description="REM-1" evidence="4">
    <location>
        <begin position="23"/>
        <end position="97"/>
    </location>
</feature>
<feature type="domain" description="BRO1" evidence="3">
    <location>
        <begin position="108"/>
        <end position="457"/>
    </location>
</feature>
<feature type="domain" description="PDZ" evidence="2">
    <location>
        <begin position="513"/>
        <end position="592"/>
    </location>
</feature>
<feature type="region of interest" description="Disordered" evidence="5">
    <location>
        <begin position="1"/>
        <end position="20"/>
    </location>
</feature>
<feature type="region of interest" description="Disordered" evidence="5">
    <location>
        <begin position="616"/>
        <end position="670"/>
    </location>
</feature>
<feature type="compositionally biased region" description="Pro residues" evidence="5">
    <location>
        <begin position="652"/>
        <end position="661"/>
    </location>
</feature>
<feature type="modified residue" description="Phosphoserine" evidence="1">
    <location>
        <position position="24"/>
    </location>
</feature>
<reference key="1">
    <citation type="submission" date="2002-03" db="EMBL/GenBank/DDBJ databases">
        <title>Structure and function of rhophilin homologs.</title>
        <authorList>
            <person name="Burbelo P.D."/>
        </authorList>
    </citation>
    <scope>NUCLEOTIDE SEQUENCE [MRNA]</scope>
</reference>
<reference key="2">
    <citation type="journal article" date="2004" name="Genome Res.">
        <title>The status, quality, and expansion of the NIH full-length cDNA project: the Mammalian Gene Collection (MGC).</title>
        <authorList>
            <consortium name="The MGC Project Team"/>
        </authorList>
    </citation>
    <scope>NUCLEOTIDE SEQUENCE [LARGE SCALE MRNA]</scope>
    <source>
        <tissue>Blood</tissue>
    </source>
</reference>
<reference key="3">
    <citation type="journal article" date="2001" name="DNA Res.">
        <title>Prediction of the coding sequences of unidentified human genes. XXI. The complete sequences of 60 new cDNA clones from brain which code for large proteins.</title>
        <authorList>
            <person name="Nagase T."/>
            <person name="Kikuno R."/>
            <person name="Ohara O."/>
        </authorList>
    </citation>
    <scope>NUCLEOTIDE SEQUENCE [LARGE SCALE MRNA] OF 4-670</scope>
    <source>
        <tissue>Brain</tissue>
    </source>
</reference>
<proteinExistence type="evidence at protein level"/>
<keyword id="KW-0175">Coiled coil</keyword>
<keyword id="KW-0597">Phosphoprotein</keyword>
<keyword id="KW-1267">Proteomics identification</keyword>
<keyword id="KW-1185">Reference proteome</keyword>